<sequence>MSIFFKPPIDIEILFDNEESRKHVDIATRSSNSSYKSMKESLPVYEDGESLGGIVTLRVRDSKKVDHLGIKVSVIGSIDMLKSHGSGNSSSKKVTSSTSSSSSNGSVDVRKNSVDQFLCQSYDLCPAGELQHSQSFPFLFRDLSKRYESYKGKNVDVAYYVKVTVMRKSTDISKIKRFWVYLYNSVTTAPNTLSANETKATTNDIAGGNYAADNASDNTQTKSTQGEAADVNQVLPISHSNNEPKPVRLDIGIENCLHIEFEYAKSQYSLKEVIVGRIYFLLTRLRIKHMELSLITRESSGLQTSNVMTDSTAIRYEIMDGSSVKGETIPIRLFLSGYDLTPNMSCNYFNVKNYLSLVIIDEDGRRYFKQSEITLYRTR</sequence>
<evidence type="ECO:0000256" key="1">
    <source>
        <dbReference type="SAM" id="MobiDB-lite"/>
    </source>
</evidence>
<evidence type="ECO:0000269" key="2">
    <source>
    </source>
</evidence>
<evidence type="ECO:0000305" key="3"/>
<evidence type="ECO:0007744" key="4">
    <source>
    </source>
</evidence>
<feature type="chain" id="PRO_0000073015" description="Carboxypeptidase Y-deficient protein 8">
    <location>
        <begin position="1"/>
        <end position="379"/>
    </location>
</feature>
<feature type="region of interest" description="Disordered" evidence="1">
    <location>
        <begin position="84"/>
        <end position="108"/>
    </location>
</feature>
<feature type="compositionally biased region" description="Low complexity" evidence="1">
    <location>
        <begin position="84"/>
        <end position="107"/>
    </location>
</feature>
<feature type="modified residue" description="Phosphoserine" evidence="4">
    <location>
        <position position="216"/>
    </location>
</feature>
<feature type="sequence conflict" description="In Ref. 1; AAA34853." evidence="3" ref="1">
    <original>A</original>
    <variation>E</variation>
    <location>
        <position position="189"/>
    </location>
</feature>
<feature type="sequence conflict" description="In Ref. 4; AAT93026." evidence="3" ref="4">
    <original>R</original>
    <variation>K</variation>
    <location>
        <position position="286"/>
    </location>
</feature>
<accession>P40335</accession>
<accession>D6VWC9</accession>
<accession>E9P910</accession>
<organism>
    <name type="scientific">Saccharomyces cerevisiae (strain ATCC 204508 / S288c)</name>
    <name type="common">Baker's yeast</name>
    <dbReference type="NCBI Taxonomy" id="559292"/>
    <lineage>
        <taxon>Eukaryota</taxon>
        <taxon>Fungi</taxon>
        <taxon>Dikarya</taxon>
        <taxon>Ascomycota</taxon>
        <taxon>Saccharomycotina</taxon>
        <taxon>Saccharomycetes</taxon>
        <taxon>Saccharomycetales</taxon>
        <taxon>Saccharomycetaceae</taxon>
        <taxon>Saccharomyces</taxon>
    </lineage>
</organism>
<keyword id="KW-0597">Phosphoprotein</keyword>
<keyword id="KW-0653">Protein transport</keyword>
<keyword id="KW-1185">Reference proteome</keyword>
<keyword id="KW-0813">Transport</keyword>
<name>PEP8_YEAST</name>
<protein>
    <recommendedName>
        <fullName>Carboxypeptidase Y-deficient protein 8</fullName>
    </recommendedName>
    <alternativeName>
        <fullName>Vacuolar protein sorting-associated protein 26</fullName>
    </alternativeName>
    <alternativeName>
        <fullName>Vacuolar protein-targeting protein 4</fullName>
    </alternativeName>
</protein>
<proteinExistence type="evidence at protein level"/>
<comment type="function">
    <text>Plays a role in vesicular protein sorting. Required for the endosome-to-Golgi retrieval of the vacuolar protein sorting receptor VPS10. Component of the membrane-associated retromer complex which is essential in endosome-to-Golgi retrograde transport. The VPS29-VPS26-VPS35 subcomplex may be involved in cargo selection.</text>
</comment>
<comment type="subunit">
    <text evidence="2">Component of the retromer complex which consists of VPS29, VPS26, VPS35, VPS5 and VPS17. Component of a retromer subcomplex consisting of VPS29, VPS26 and VPS35.</text>
</comment>
<comment type="interaction">
    <interactant intactId="EBI-20373">
        <id>P40335</id>
    </interactant>
    <interactant intactId="EBI-20366">
        <id>P32913</id>
        <label>VPS17</label>
    </interactant>
    <organismsDiffer>false</organismsDiffer>
    <experiments>3</experiments>
</comment>
<comment type="interaction">
    <interactant intactId="EBI-20373">
        <id>P40335</id>
    </interactant>
    <interactant intactId="EBI-20483">
        <id>Q92331</id>
        <label>VPS5</label>
    </interactant>
    <organismsDiffer>false</organismsDiffer>
    <experiments>3</experiments>
</comment>
<comment type="similarity">
    <text evidence="3">Belongs to the VPS26 family.</text>
</comment>
<reference key="1">
    <citation type="journal article" date="1994" name="Genes Dev.">
        <title>The yeast homolog of H&lt;beta&gt;58, a mouse gene essential for embryogenesis, performs a role in the delivery of proteins to the vacuole.</title>
        <authorList>
            <person name="Bachhawat A.K."/>
            <person name="Suhan J."/>
            <person name="Jones E.W."/>
        </authorList>
    </citation>
    <scope>NUCLEOTIDE SEQUENCE [GENOMIC DNA]</scope>
    <source>
        <strain>ATCC 26109 / X2180</strain>
    </source>
</reference>
<reference key="2">
    <citation type="journal article" date="1996" name="EMBO J.">
        <title>Complete nucleotide sequence of Saccharomyces cerevisiae chromosome X.</title>
        <authorList>
            <person name="Galibert F."/>
            <person name="Alexandraki D."/>
            <person name="Baur A."/>
            <person name="Boles E."/>
            <person name="Chalwatzis N."/>
            <person name="Chuat J.-C."/>
            <person name="Coster F."/>
            <person name="Cziepluch C."/>
            <person name="de Haan M."/>
            <person name="Domdey H."/>
            <person name="Durand P."/>
            <person name="Entian K.-D."/>
            <person name="Gatius M."/>
            <person name="Goffeau A."/>
            <person name="Grivell L.A."/>
            <person name="Hennemann A."/>
            <person name="Herbert C.J."/>
            <person name="Heumann K."/>
            <person name="Hilger F."/>
            <person name="Hollenberg C.P."/>
            <person name="Huang M.-E."/>
            <person name="Jacq C."/>
            <person name="Jauniaux J.-C."/>
            <person name="Katsoulou C."/>
            <person name="Kirchrath L."/>
            <person name="Kleine K."/>
            <person name="Kordes E."/>
            <person name="Koetter P."/>
            <person name="Liebl S."/>
            <person name="Louis E.J."/>
            <person name="Manus V."/>
            <person name="Mewes H.-W."/>
            <person name="Miosga T."/>
            <person name="Obermaier B."/>
            <person name="Perea J."/>
            <person name="Pohl T.M."/>
            <person name="Portetelle D."/>
            <person name="Pujol A."/>
            <person name="Purnelle B."/>
            <person name="Ramezani Rad M."/>
            <person name="Rasmussen S.W."/>
            <person name="Rose M."/>
            <person name="Rossau R."/>
            <person name="Schaaff-Gerstenschlaeger I."/>
            <person name="Smits P.H.M."/>
            <person name="Scarcez T."/>
            <person name="Soriano N."/>
            <person name="To Van D."/>
            <person name="Tzermia M."/>
            <person name="Van Broekhoven A."/>
            <person name="Vandenbol M."/>
            <person name="Wedler H."/>
            <person name="von Wettstein D."/>
            <person name="Wambutt R."/>
            <person name="Zagulski M."/>
            <person name="Zollner A."/>
            <person name="Karpfinger-Hartl L."/>
        </authorList>
    </citation>
    <scope>NUCLEOTIDE SEQUENCE [LARGE SCALE GENOMIC DNA]</scope>
    <source>
        <strain>ATCC 204508 / S288c</strain>
    </source>
</reference>
<reference key="3">
    <citation type="journal article" date="2014" name="G3 (Bethesda)">
        <title>The reference genome sequence of Saccharomyces cerevisiae: Then and now.</title>
        <authorList>
            <person name="Engel S.R."/>
            <person name="Dietrich F.S."/>
            <person name="Fisk D.G."/>
            <person name="Binkley G."/>
            <person name="Balakrishnan R."/>
            <person name="Costanzo M.C."/>
            <person name="Dwight S.S."/>
            <person name="Hitz B.C."/>
            <person name="Karra K."/>
            <person name="Nash R.S."/>
            <person name="Weng S."/>
            <person name="Wong E.D."/>
            <person name="Lloyd P."/>
            <person name="Skrzypek M.S."/>
            <person name="Miyasato S.R."/>
            <person name="Simison M."/>
            <person name="Cherry J.M."/>
        </authorList>
    </citation>
    <scope>GENOME REANNOTATION</scope>
    <source>
        <strain>ATCC 204508 / S288c</strain>
    </source>
</reference>
<reference key="4">
    <citation type="journal article" date="2007" name="Genome Res.">
        <title>Approaching a complete repository of sequence-verified protein-encoding clones for Saccharomyces cerevisiae.</title>
        <authorList>
            <person name="Hu Y."/>
            <person name="Rolfs A."/>
            <person name="Bhullar B."/>
            <person name="Murthy T.V.S."/>
            <person name="Zhu C."/>
            <person name="Berger M.F."/>
            <person name="Camargo A.A."/>
            <person name="Kelley F."/>
            <person name="McCarron S."/>
            <person name="Jepson D."/>
            <person name="Richardson A."/>
            <person name="Raphael J."/>
            <person name="Moreira D."/>
            <person name="Taycher E."/>
            <person name="Zuo D."/>
            <person name="Mohr S."/>
            <person name="Kane M.F."/>
            <person name="Williamson J."/>
            <person name="Simpson A.J.G."/>
            <person name="Bulyk M.L."/>
            <person name="Harlow E."/>
            <person name="Marsischky G."/>
            <person name="Kolodner R.D."/>
            <person name="LaBaer J."/>
        </authorList>
    </citation>
    <scope>NUCLEOTIDE SEQUENCE [GENOMIC DNA]</scope>
    <source>
        <strain>ATCC 204508 / S288c</strain>
    </source>
</reference>
<reference key="5">
    <citation type="journal article" date="1998" name="J. Cell Biol.">
        <title>A membrane coat complex essential for endosome-to-Golgi retrograde transport in yeast.</title>
        <authorList>
            <person name="Seaman M.N."/>
            <person name="McCaffery J.M."/>
            <person name="Emr S.D."/>
        </authorList>
    </citation>
    <scope>IDENTIFICATION IN THE RETROMER COMPLEX</scope>
</reference>
<reference key="6">
    <citation type="journal article" date="2009" name="Science">
        <title>Global analysis of Cdk1 substrate phosphorylation sites provides insights into evolution.</title>
        <authorList>
            <person name="Holt L.J."/>
            <person name="Tuch B.B."/>
            <person name="Villen J."/>
            <person name="Johnson A.D."/>
            <person name="Gygi S.P."/>
            <person name="Morgan D.O."/>
        </authorList>
    </citation>
    <scope>PHOSPHORYLATION [LARGE SCALE ANALYSIS] AT SER-216</scope>
    <scope>IDENTIFICATION BY MASS SPECTROMETRY [LARGE SCALE ANALYSIS]</scope>
</reference>
<dbReference type="EMBL" id="L11623">
    <property type="protein sequence ID" value="AAA34853.1"/>
    <property type="molecule type" value="Genomic_DNA"/>
</dbReference>
<dbReference type="EMBL" id="Z49328">
    <property type="protein sequence ID" value="CAA89344.1"/>
    <property type="molecule type" value="Genomic_DNA"/>
</dbReference>
<dbReference type="EMBL" id="AY693007">
    <property type="protein sequence ID" value="AAT93026.1"/>
    <property type="molecule type" value="Genomic_DNA"/>
</dbReference>
<dbReference type="EMBL" id="BK006943">
    <property type="protein sequence ID" value="DAA08745.1"/>
    <property type="molecule type" value="Genomic_DNA"/>
</dbReference>
<dbReference type="PIR" id="S56825">
    <property type="entry name" value="S56825"/>
</dbReference>
<dbReference type="RefSeq" id="NP_012482.1">
    <property type="nucleotide sequence ID" value="NM_001181486.1"/>
</dbReference>
<dbReference type="SMR" id="P40335"/>
<dbReference type="BioGRID" id="33701">
    <property type="interactions" value="375"/>
</dbReference>
<dbReference type="ComplexPortal" id="CPX-1653">
    <property type="entry name" value="Retromer complex"/>
</dbReference>
<dbReference type="DIP" id="DIP-4572N"/>
<dbReference type="FunCoup" id="P40335">
    <property type="interactions" value="985"/>
</dbReference>
<dbReference type="IntAct" id="P40335">
    <property type="interactions" value="14"/>
</dbReference>
<dbReference type="MINT" id="P40335"/>
<dbReference type="STRING" id="4932.YJL053W"/>
<dbReference type="TCDB" id="9.A.63.1.1">
    <property type="family name" value="the retromer-dependent vacuolar protein sorting (r-vps) family"/>
</dbReference>
<dbReference type="iPTMnet" id="P40335"/>
<dbReference type="PaxDb" id="4932-YJL053W"/>
<dbReference type="PeptideAtlas" id="P40335"/>
<dbReference type="EnsemblFungi" id="YJL053W_mRNA">
    <property type="protein sequence ID" value="YJL053W"/>
    <property type="gene ID" value="YJL053W"/>
</dbReference>
<dbReference type="GeneID" id="853393"/>
<dbReference type="KEGG" id="sce:YJL053W"/>
<dbReference type="AGR" id="SGD:S000003589"/>
<dbReference type="SGD" id="S000003589">
    <property type="gene designation" value="PEP8"/>
</dbReference>
<dbReference type="VEuPathDB" id="FungiDB:YJL053W"/>
<dbReference type="eggNOG" id="KOG3063">
    <property type="taxonomic scope" value="Eukaryota"/>
</dbReference>
<dbReference type="GeneTree" id="ENSGT00950000183064"/>
<dbReference type="HOGENOM" id="CLU_031077_2_0_1"/>
<dbReference type="InParanoid" id="P40335"/>
<dbReference type="OMA" id="FKWKFSS"/>
<dbReference type="OrthoDB" id="3821113at2759"/>
<dbReference type="BioCyc" id="YEAST:G3O-31516-MONOMER"/>
<dbReference type="Reactome" id="R-SCE-3238698">
    <property type="pathway name" value="WNT ligand biogenesis and trafficking"/>
</dbReference>
<dbReference type="BioGRID-ORCS" id="853393">
    <property type="hits" value="0 hits in 10 CRISPR screens"/>
</dbReference>
<dbReference type="PRO" id="PR:P40335"/>
<dbReference type="Proteomes" id="UP000002311">
    <property type="component" value="Chromosome X"/>
</dbReference>
<dbReference type="RNAct" id="P40335">
    <property type="molecule type" value="protein"/>
</dbReference>
<dbReference type="GO" id="GO:0005737">
    <property type="term" value="C:cytoplasm"/>
    <property type="evidence" value="ECO:0007005"/>
    <property type="project" value="SGD"/>
</dbReference>
<dbReference type="GO" id="GO:0005829">
    <property type="term" value="C:cytosol"/>
    <property type="evidence" value="ECO:0007669"/>
    <property type="project" value="GOC"/>
</dbReference>
<dbReference type="GO" id="GO:0012505">
    <property type="term" value="C:endomembrane system"/>
    <property type="evidence" value="ECO:0000303"/>
    <property type="project" value="ComplexPortal"/>
</dbReference>
<dbReference type="GO" id="GO:0005768">
    <property type="term" value="C:endosome"/>
    <property type="evidence" value="ECO:0000314"/>
    <property type="project" value="SGD"/>
</dbReference>
<dbReference type="GO" id="GO:0000329">
    <property type="term" value="C:fungal-type vacuole membrane"/>
    <property type="evidence" value="ECO:0007005"/>
    <property type="project" value="SGD"/>
</dbReference>
<dbReference type="GO" id="GO:0030904">
    <property type="term" value="C:retromer complex"/>
    <property type="evidence" value="ECO:0000315"/>
    <property type="project" value="SGD"/>
</dbReference>
<dbReference type="GO" id="GO:0030906">
    <property type="term" value="C:retromer, cargo-selective complex"/>
    <property type="evidence" value="ECO:0000315"/>
    <property type="project" value="SGD"/>
</dbReference>
<dbReference type="GO" id="GO:0140318">
    <property type="term" value="F:protein transporter activity"/>
    <property type="evidence" value="ECO:0000315"/>
    <property type="project" value="SGD"/>
</dbReference>
<dbReference type="GO" id="GO:0032456">
    <property type="term" value="P:endocytic recycling"/>
    <property type="evidence" value="ECO:0000303"/>
    <property type="project" value="ComplexPortal"/>
</dbReference>
<dbReference type="GO" id="GO:0006886">
    <property type="term" value="P:intracellular protein transport"/>
    <property type="evidence" value="ECO:0000318"/>
    <property type="project" value="GO_Central"/>
</dbReference>
<dbReference type="GO" id="GO:0045053">
    <property type="term" value="P:protein retention in Golgi apparatus"/>
    <property type="evidence" value="ECO:0000315"/>
    <property type="project" value="SGD"/>
</dbReference>
<dbReference type="GO" id="GO:0042147">
    <property type="term" value="P:retrograde transport, endosome to Golgi"/>
    <property type="evidence" value="ECO:0000353"/>
    <property type="project" value="SGD"/>
</dbReference>
<dbReference type="FunFam" id="2.60.40.640:FF:000035">
    <property type="entry name" value="Carboxypeptidase Y-deficient"/>
    <property type="match status" value="1"/>
</dbReference>
<dbReference type="FunFam" id="2.60.40.640:FF:000015">
    <property type="entry name" value="Vacuolar protein sorting-associated protein 26"/>
    <property type="match status" value="1"/>
</dbReference>
<dbReference type="Gene3D" id="2.60.40.640">
    <property type="match status" value="2"/>
</dbReference>
<dbReference type="InterPro" id="IPR014752">
    <property type="entry name" value="Arrestin-like_C"/>
</dbReference>
<dbReference type="InterPro" id="IPR014756">
    <property type="entry name" value="Ig_E-set"/>
</dbReference>
<dbReference type="InterPro" id="IPR028934">
    <property type="entry name" value="Vps26-related"/>
</dbReference>
<dbReference type="PANTHER" id="PTHR12233">
    <property type="entry name" value="VACUOLAR PROTEIN SORTING 26 RELATED"/>
    <property type="match status" value="1"/>
</dbReference>
<dbReference type="Pfam" id="PF03643">
    <property type="entry name" value="Vps26"/>
    <property type="match status" value="1"/>
</dbReference>
<dbReference type="SUPFAM" id="SSF81296">
    <property type="entry name" value="E set domains"/>
    <property type="match status" value="1"/>
</dbReference>
<gene>
    <name type="primary">PEP8</name>
    <name type="synonym">GRD6</name>
    <name type="synonym">VPS26</name>
    <name type="synonym">VPT4</name>
    <name type="ordered locus">YJL053W</name>
    <name type="ORF">J1152</name>
</gene>